<organism>
    <name type="scientific">Neisseria meningitidis serogroup B (strain ATCC BAA-335 / MC58)</name>
    <dbReference type="NCBI Taxonomy" id="122586"/>
    <lineage>
        <taxon>Bacteria</taxon>
        <taxon>Pseudomonadati</taxon>
        <taxon>Pseudomonadota</taxon>
        <taxon>Betaproteobacteria</taxon>
        <taxon>Neisseriales</taxon>
        <taxon>Neisseriaceae</taxon>
        <taxon>Neisseria</taxon>
    </lineage>
</organism>
<protein>
    <recommendedName>
        <fullName evidence="1">ATP synthase subunit b</fullName>
    </recommendedName>
    <alternativeName>
        <fullName evidence="1">ATP synthase F(0) sector subunit b</fullName>
    </alternativeName>
    <alternativeName>
        <fullName evidence="1">ATPase subunit I</fullName>
    </alternativeName>
    <alternativeName>
        <fullName evidence="1">F-type ATPase subunit b</fullName>
        <shortName evidence="1">F-ATPase subunit b</shortName>
    </alternativeName>
</protein>
<gene>
    <name evidence="1" type="primary">atpF</name>
    <name type="ordered locus">NMB1938</name>
</gene>
<accession>Q7DD66</accession>
<sequence>MNINATLFAQIIVFFGLVWFTMKFVWPPIAKALDERAAKVAEGLAAAERGKSDFEQAEKKVAELLAEGRNQVSEMVANAEKRAAKIVEEAKEQASSEAARIAAQAKADVEQELFRARESLREQVAVLAVKGAESILRSEVDASKHAKLLDTLKQEL</sequence>
<name>ATPF_NEIMB</name>
<evidence type="ECO:0000255" key="1">
    <source>
        <dbReference type="HAMAP-Rule" id="MF_01398"/>
    </source>
</evidence>
<proteinExistence type="inferred from homology"/>
<keyword id="KW-0066">ATP synthesis</keyword>
<keyword id="KW-0997">Cell inner membrane</keyword>
<keyword id="KW-1003">Cell membrane</keyword>
<keyword id="KW-0138">CF(0)</keyword>
<keyword id="KW-0375">Hydrogen ion transport</keyword>
<keyword id="KW-0406">Ion transport</keyword>
<keyword id="KW-0472">Membrane</keyword>
<keyword id="KW-1185">Reference proteome</keyword>
<keyword id="KW-0812">Transmembrane</keyword>
<keyword id="KW-1133">Transmembrane helix</keyword>
<keyword id="KW-0813">Transport</keyword>
<dbReference type="EMBL" id="AE002098">
    <property type="protein sequence ID" value="AAF42267.1"/>
    <property type="molecule type" value="Genomic_DNA"/>
</dbReference>
<dbReference type="PIR" id="C81025">
    <property type="entry name" value="C81025"/>
</dbReference>
<dbReference type="RefSeq" id="NP_274932.1">
    <property type="nucleotide sequence ID" value="NC_003112.2"/>
</dbReference>
<dbReference type="RefSeq" id="WP_002214796.1">
    <property type="nucleotide sequence ID" value="NC_003112.2"/>
</dbReference>
<dbReference type="SMR" id="Q7DD66"/>
<dbReference type="FunCoup" id="Q7DD66">
    <property type="interactions" value="173"/>
</dbReference>
<dbReference type="STRING" id="122586.NMB1938"/>
<dbReference type="PaxDb" id="122586-NMB1938"/>
<dbReference type="KEGG" id="nme:NMB1938"/>
<dbReference type="PATRIC" id="fig|122586.8.peg.2466"/>
<dbReference type="HOGENOM" id="CLU_079215_4_5_4"/>
<dbReference type="InParanoid" id="Q7DD66"/>
<dbReference type="OrthoDB" id="9788020at2"/>
<dbReference type="Proteomes" id="UP000000425">
    <property type="component" value="Chromosome"/>
</dbReference>
<dbReference type="GO" id="GO:0005886">
    <property type="term" value="C:plasma membrane"/>
    <property type="evidence" value="ECO:0007669"/>
    <property type="project" value="UniProtKB-SubCell"/>
</dbReference>
<dbReference type="GO" id="GO:0045259">
    <property type="term" value="C:proton-transporting ATP synthase complex"/>
    <property type="evidence" value="ECO:0007669"/>
    <property type="project" value="UniProtKB-KW"/>
</dbReference>
<dbReference type="GO" id="GO:0046933">
    <property type="term" value="F:proton-transporting ATP synthase activity, rotational mechanism"/>
    <property type="evidence" value="ECO:0007669"/>
    <property type="project" value="UniProtKB-UniRule"/>
</dbReference>
<dbReference type="CDD" id="cd06503">
    <property type="entry name" value="ATP-synt_Fo_b"/>
    <property type="match status" value="1"/>
</dbReference>
<dbReference type="FunFam" id="1.20.5.620:FF:000001">
    <property type="entry name" value="ATP synthase subunit b"/>
    <property type="match status" value="1"/>
</dbReference>
<dbReference type="Gene3D" id="1.20.5.620">
    <property type="entry name" value="F1F0 ATP synthase subunit B, membrane domain"/>
    <property type="match status" value="1"/>
</dbReference>
<dbReference type="HAMAP" id="MF_01398">
    <property type="entry name" value="ATP_synth_b_bprime"/>
    <property type="match status" value="1"/>
</dbReference>
<dbReference type="InterPro" id="IPR028987">
    <property type="entry name" value="ATP_synth_B-like_membr_sf"/>
</dbReference>
<dbReference type="InterPro" id="IPR002146">
    <property type="entry name" value="ATP_synth_b/b'su_bac/chlpt"/>
</dbReference>
<dbReference type="InterPro" id="IPR005864">
    <property type="entry name" value="ATP_synth_F0_bsu_bac"/>
</dbReference>
<dbReference type="InterPro" id="IPR050059">
    <property type="entry name" value="ATP_synthase_B_chain"/>
</dbReference>
<dbReference type="NCBIfam" id="TIGR01144">
    <property type="entry name" value="ATP_synt_b"/>
    <property type="match status" value="1"/>
</dbReference>
<dbReference type="NCBIfam" id="NF004411">
    <property type="entry name" value="PRK05759.1-2"/>
    <property type="match status" value="1"/>
</dbReference>
<dbReference type="PANTHER" id="PTHR33445:SF1">
    <property type="entry name" value="ATP SYNTHASE SUBUNIT B"/>
    <property type="match status" value="1"/>
</dbReference>
<dbReference type="PANTHER" id="PTHR33445">
    <property type="entry name" value="ATP SYNTHASE SUBUNIT B', CHLOROPLASTIC"/>
    <property type="match status" value="1"/>
</dbReference>
<dbReference type="Pfam" id="PF00430">
    <property type="entry name" value="ATP-synt_B"/>
    <property type="match status" value="1"/>
</dbReference>
<dbReference type="SUPFAM" id="SSF81573">
    <property type="entry name" value="F1F0 ATP synthase subunit B, membrane domain"/>
    <property type="match status" value="1"/>
</dbReference>
<reference key="1">
    <citation type="journal article" date="2000" name="Science">
        <title>Complete genome sequence of Neisseria meningitidis serogroup B strain MC58.</title>
        <authorList>
            <person name="Tettelin H."/>
            <person name="Saunders N.J."/>
            <person name="Heidelberg J.F."/>
            <person name="Jeffries A.C."/>
            <person name="Nelson K.E."/>
            <person name="Eisen J.A."/>
            <person name="Ketchum K.A."/>
            <person name="Hood D.W."/>
            <person name="Peden J.F."/>
            <person name="Dodson R.J."/>
            <person name="Nelson W.C."/>
            <person name="Gwinn M.L."/>
            <person name="DeBoy R.T."/>
            <person name="Peterson J.D."/>
            <person name="Hickey E.K."/>
            <person name="Haft D.H."/>
            <person name="Salzberg S.L."/>
            <person name="White O."/>
            <person name="Fleischmann R.D."/>
            <person name="Dougherty B.A."/>
            <person name="Mason T.M."/>
            <person name="Ciecko A."/>
            <person name="Parksey D.S."/>
            <person name="Blair E."/>
            <person name="Cittone H."/>
            <person name="Clark E.B."/>
            <person name="Cotton M.D."/>
            <person name="Utterback T.R."/>
            <person name="Khouri H.M."/>
            <person name="Qin H."/>
            <person name="Vamathevan J.J."/>
            <person name="Gill J."/>
            <person name="Scarlato V."/>
            <person name="Masignani V."/>
            <person name="Pizza M."/>
            <person name="Grandi G."/>
            <person name="Sun L."/>
            <person name="Smith H.O."/>
            <person name="Fraser C.M."/>
            <person name="Moxon E.R."/>
            <person name="Rappuoli R."/>
            <person name="Venter J.C."/>
        </authorList>
    </citation>
    <scope>NUCLEOTIDE SEQUENCE [LARGE SCALE GENOMIC DNA]</scope>
    <source>
        <strain>ATCC BAA-335 / MC58</strain>
    </source>
</reference>
<comment type="function">
    <text evidence="1">F(1)F(0) ATP synthase produces ATP from ADP in the presence of a proton or sodium gradient. F-type ATPases consist of two structural domains, F(1) containing the extramembraneous catalytic core and F(0) containing the membrane proton channel, linked together by a central stalk and a peripheral stalk. During catalysis, ATP synthesis in the catalytic domain of F(1) is coupled via a rotary mechanism of the central stalk subunits to proton translocation.</text>
</comment>
<comment type="function">
    <text evidence="1">Component of the F(0) channel, it forms part of the peripheral stalk, linking F(1) to F(0).</text>
</comment>
<comment type="subunit">
    <text evidence="1">F-type ATPases have 2 components, F(1) - the catalytic core - and F(0) - the membrane proton channel. F(1) has five subunits: alpha(3), beta(3), gamma(1), delta(1), epsilon(1). F(0) has three main subunits: a(1), b(2) and c(10-14). The alpha and beta chains form an alternating ring which encloses part of the gamma chain. F(1) is attached to F(0) by a central stalk formed by the gamma and epsilon chains, while a peripheral stalk is formed by the delta and b chains.</text>
</comment>
<comment type="subcellular location">
    <subcellularLocation>
        <location evidence="1">Cell inner membrane</location>
        <topology evidence="1">Single-pass membrane protein</topology>
    </subcellularLocation>
</comment>
<comment type="similarity">
    <text evidence="1">Belongs to the ATPase B chain family.</text>
</comment>
<feature type="chain" id="PRO_0000368622" description="ATP synthase subunit b">
    <location>
        <begin position="1"/>
        <end position="156"/>
    </location>
</feature>
<feature type="transmembrane region" description="Helical" evidence="1">
    <location>
        <begin position="7"/>
        <end position="27"/>
    </location>
</feature>